<accession>Q9WUH7</accession>
<dbReference type="EMBL" id="AF134918">
    <property type="protein sequence ID" value="AAD30541.1"/>
    <property type="molecule type" value="mRNA"/>
</dbReference>
<dbReference type="EMBL" id="BC049183">
    <property type="protein sequence ID" value="AAH49183.1"/>
    <property type="molecule type" value="mRNA"/>
</dbReference>
<dbReference type="CCDS" id="CCDS29853.1"/>
<dbReference type="RefSeq" id="NP_001400556.1">
    <property type="nucleotide sequence ID" value="NM_001413627.1"/>
</dbReference>
<dbReference type="RefSeq" id="NP_036106.1">
    <property type="nucleotide sequence ID" value="NM_011976.2"/>
</dbReference>
<dbReference type="RefSeq" id="XP_036017494.1">
    <property type="nucleotide sequence ID" value="XM_036161601.1"/>
</dbReference>
<dbReference type="SMR" id="Q9WUH7"/>
<dbReference type="BioGRID" id="205002">
    <property type="interactions" value="4"/>
</dbReference>
<dbReference type="FunCoup" id="Q9WUH7">
    <property type="interactions" value="448"/>
</dbReference>
<dbReference type="MINT" id="Q9WUH7"/>
<dbReference type="STRING" id="10090.ENSMUSP00000026225"/>
<dbReference type="GlyConnect" id="2700">
    <property type="glycosylation" value="1 N-Linked glycan (1 site)"/>
</dbReference>
<dbReference type="GlyCosmos" id="Q9WUH7">
    <property type="glycosylation" value="6 sites, 1 glycan"/>
</dbReference>
<dbReference type="GlyGen" id="Q9WUH7">
    <property type="glycosylation" value="8 sites, 4 N-linked glycans (4 sites)"/>
</dbReference>
<dbReference type="iPTMnet" id="Q9WUH7"/>
<dbReference type="PhosphoSitePlus" id="Q9WUH7"/>
<dbReference type="SwissPalm" id="Q9WUH7"/>
<dbReference type="jPOST" id="Q9WUH7"/>
<dbReference type="PaxDb" id="10090-ENSMUSP00000026225"/>
<dbReference type="PeptideAtlas" id="Q9WUH7"/>
<dbReference type="ProteomicsDB" id="256772"/>
<dbReference type="Antibodypedia" id="31221">
    <property type="antibodies" value="62 antibodies from 17 providers"/>
</dbReference>
<dbReference type="DNASU" id="26456"/>
<dbReference type="Ensembl" id="ENSMUST00000026225.15">
    <property type="protein sequence ID" value="ENSMUSP00000026225.9"/>
    <property type="gene ID" value="ENSMUSG00000025207.17"/>
</dbReference>
<dbReference type="Ensembl" id="ENSMUST00000130549.8">
    <property type="protein sequence ID" value="ENSMUSP00000138321.2"/>
    <property type="gene ID" value="ENSMUSG00000025207.17"/>
</dbReference>
<dbReference type="Ensembl" id="ENSMUST00000179305.2">
    <property type="protein sequence ID" value="ENSMUSP00000137395.2"/>
    <property type="gene ID" value="ENSMUSG00000025207.17"/>
</dbReference>
<dbReference type="GeneID" id="26456"/>
<dbReference type="KEGG" id="mmu:26456"/>
<dbReference type="UCSC" id="uc008hqf.1">
    <property type="organism name" value="mouse"/>
</dbReference>
<dbReference type="AGR" id="MGI:1347047"/>
<dbReference type="CTD" id="57715"/>
<dbReference type="MGI" id="MGI:1347047">
    <property type="gene designation" value="Sema4g"/>
</dbReference>
<dbReference type="VEuPathDB" id="HostDB:ENSMUSG00000025207"/>
<dbReference type="eggNOG" id="KOG3611">
    <property type="taxonomic scope" value="Eukaryota"/>
</dbReference>
<dbReference type="GeneTree" id="ENSGT00940000157186"/>
<dbReference type="HOGENOM" id="CLU_009051_4_2_1"/>
<dbReference type="InParanoid" id="Q9WUH7"/>
<dbReference type="OMA" id="SGPYMEY"/>
<dbReference type="OrthoDB" id="9988752at2759"/>
<dbReference type="PhylomeDB" id="Q9WUH7"/>
<dbReference type="TreeFam" id="TF316102"/>
<dbReference type="BioGRID-ORCS" id="26456">
    <property type="hits" value="2 hits in 77 CRISPR screens"/>
</dbReference>
<dbReference type="ChiTaRS" id="Sema4g">
    <property type="organism name" value="mouse"/>
</dbReference>
<dbReference type="PRO" id="PR:Q9WUH7"/>
<dbReference type="Proteomes" id="UP000000589">
    <property type="component" value="Chromosome 19"/>
</dbReference>
<dbReference type="RNAct" id="Q9WUH7">
    <property type="molecule type" value="protein"/>
</dbReference>
<dbReference type="Bgee" id="ENSMUSG00000025207">
    <property type="expression patterns" value="Expressed in left lobe of liver and 199 other cell types or tissues"/>
</dbReference>
<dbReference type="GO" id="GO:0005886">
    <property type="term" value="C:plasma membrane"/>
    <property type="evidence" value="ECO:0007669"/>
    <property type="project" value="UniProtKB-SubCell"/>
</dbReference>
<dbReference type="GO" id="GO:0030215">
    <property type="term" value="F:semaphorin receptor binding"/>
    <property type="evidence" value="ECO:0007669"/>
    <property type="project" value="InterPro"/>
</dbReference>
<dbReference type="GO" id="GO:0030154">
    <property type="term" value="P:cell differentiation"/>
    <property type="evidence" value="ECO:0007669"/>
    <property type="project" value="UniProtKB-KW"/>
</dbReference>
<dbReference type="GO" id="GO:0007399">
    <property type="term" value="P:nervous system development"/>
    <property type="evidence" value="ECO:0007669"/>
    <property type="project" value="UniProtKB-KW"/>
</dbReference>
<dbReference type="GO" id="GO:0071526">
    <property type="term" value="P:semaphorin-plexin signaling pathway"/>
    <property type="evidence" value="ECO:0007669"/>
    <property type="project" value="UniProtKB-ARBA"/>
</dbReference>
<dbReference type="CDD" id="cd05872">
    <property type="entry name" value="Ig_Sema4B_like"/>
    <property type="match status" value="1"/>
</dbReference>
<dbReference type="FunFam" id="2.130.10.10:FF:000033">
    <property type="entry name" value="Semaphorin 4B"/>
    <property type="match status" value="1"/>
</dbReference>
<dbReference type="FunFam" id="2.60.40.10:FF:000799">
    <property type="entry name" value="Semaphorin 4G"/>
    <property type="match status" value="1"/>
</dbReference>
<dbReference type="FunFam" id="3.30.1680.10:FF:000023">
    <property type="entry name" value="semaphorin-4G isoform X2"/>
    <property type="match status" value="1"/>
</dbReference>
<dbReference type="Gene3D" id="2.60.40.10">
    <property type="entry name" value="Immunoglobulins"/>
    <property type="match status" value="1"/>
</dbReference>
<dbReference type="Gene3D" id="3.30.1680.10">
    <property type="entry name" value="ligand-binding face of the semaphorins, domain 2"/>
    <property type="match status" value="1"/>
</dbReference>
<dbReference type="Gene3D" id="2.130.10.10">
    <property type="entry name" value="YVTN repeat-like/Quinoprotein amine dehydrogenase"/>
    <property type="match status" value="1"/>
</dbReference>
<dbReference type="InterPro" id="IPR007110">
    <property type="entry name" value="Ig-like_dom"/>
</dbReference>
<dbReference type="InterPro" id="IPR036179">
    <property type="entry name" value="Ig-like_dom_sf"/>
</dbReference>
<dbReference type="InterPro" id="IPR013783">
    <property type="entry name" value="Ig-like_fold"/>
</dbReference>
<dbReference type="InterPro" id="IPR003599">
    <property type="entry name" value="Ig_sub"/>
</dbReference>
<dbReference type="InterPro" id="IPR002165">
    <property type="entry name" value="Plexin_repeat"/>
</dbReference>
<dbReference type="InterPro" id="IPR016201">
    <property type="entry name" value="PSI"/>
</dbReference>
<dbReference type="InterPro" id="IPR001627">
    <property type="entry name" value="Semap_dom"/>
</dbReference>
<dbReference type="InterPro" id="IPR036352">
    <property type="entry name" value="Semap_dom_sf"/>
</dbReference>
<dbReference type="InterPro" id="IPR027231">
    <property type="entry name" value="Semaphorin"/>
</dbReference>
<dbReference type="InterPro" id="IPR015943">
    <property type="entry name" value="WD40/YVTN_repeat-like_dom_sf"/>
</dbReference>
<dbReference type="PANTHER" id="PTHR11036">
    <property type="entry name" value="SEMAPHORIN"/>
    <property type="match status" value="1"/>
</dbReference>
<dbReference type="PANTHER" id="PTHR11036:SF17">
    <property type="entry name" value="SEMAPHORIN-4G"/>
    <property type="match status" value="1"/>
</dbReference>
<dbReference type="Pfam" id="PF01437">
    <property type="entry name" value="PSI"/>
    <property type="match status" value="1"/>
</dbReference>
<dbReference type="Pfam" id="PF01403">
    <property type="entry name" value="Sema"/>
    <property type="match status" value="1"/>
</dbReference>
<dbReference type="SMART" id="SM00409">
    <property type="entry name" value="IG"/>
    <property type="match status" value="1"/>
</dbReference>
<dbReference type="SMART" id="SM00423">
    <property type="entry name" value="PSI"/>
    <property type="match status" value="1"/>
</dbReference>
<dbReference type="SMART" id="SM00630">
    <property type="entry name" value="Sema"/>
    <property type="match status" value="1"/>
</dbReference>
<dbReference type="SUPFAM" id="SSF48726">
    <property type="entry name" value="Immunoglobulin"/>
    <property type="match status" value="1"/>
</dbReference>
<dbReference type="SUPFAM" id="SSF103575">
    <property type="entry name" value="Plexin repeat"/>
    <property type="match status" value="1"/>
</dbReference>
<dbReference type="SUPFAM" id="SSF101912">
    <property type="entry name" value="Sema domain"/>
    <property type="match status" value="1"/>
</dbReference>
<dbReference type="PROSITE" id="PS50835">
    <property type="entry name" value="IG_LIKE"/>
    <property type="match status" value="1"/>
</dbReference>
<dbReference type="PROSITE" id="PS51004">
    <property type="entry name" value="SEMA"/>
    <property type="match status" value="1"/>
</dbReference>
<organism>
    <name type="scientific">Mus musculus</name>
    <name type="common">Mouse</name>
    <dbReference type="NCBI Taxonomy" id="10090"/>
    <lineage>
        <taxon>Eukaryota</taxon>
        <taxon>Metazoa</taxon>
        <taxon>Chordata</taxon>
        <taxon>Craniata</taxon>
        <taxon>Vertebrata</taxon>
        <taxon>Euteleostomi</taxon>
        <taxon>Mammalia</taxon>
        <taxon>Eutheria</taxon>
        <taxon>Euarchontoglires</taxon>
        <taxon>Glires</taxon>
        <taxon>Rodentia</taxon>
        <taxon>Myomorpha</taxon>
        <taxon>Muroidea</taxon>
        <taxon>Muridae</taxon>
        <taxon>Murinae</taxon>
        <taxon>Mus</taxon>
        <taxon>Mus</taxon>
    </lineage>
</organism>
<evidence type="ECO:0000250" key="1"/>
<evidence type="ECO:0000250" key="2">
    <source>
        <dbReference type="UniProtKB" id="Q9NTN9"/>
    </source>
</evidence>
<evidence type="ECO:0000255" key="3"/>
<evidence type="ECO:0000255" key="4">
    <source>
        <dbReference type="PROSITE-ProRule" id="PRU00352"/>
    </source>
</evidence>
<evidence type="ECO:0000256" key="5">
    <source>
        <dbReference type="SAM" id="MobiDB-lite"/>
    </source>
</evidence>
<evidence type="ECO:0000269" key="6">
    <source>
    </source>
</evidence>
<evidence type="ECO:0000305" key="7"/>
<evidence type="ECO:0007744" key="8">
    <source>
    </source>
</evidence>
<evidence type="ECO:0007744" key="9">
    <source>
    </source>
</evidence>
<comment type="function">
    <text evidence="6">Cell surface receptor for PLXNB2. May play a role in axon guidance.</text>
</comment>
<comment type="subunit">
    <text evidence="6">Interacts with PLXNB2.</text>
</comment>
<comment type="subcellular location">
    <subcellularLocation>
        <location>Cell membrane</location>
        <topology>Single-pass type I membrane protein</topology>
    </subcellularLocation>
</comment>
<comment type="tissue specificity">
    <text>Brain, spinal cord, and several sensory organs as well as specific populations of projection neurons.</text>
</comment>
<comment type="developmental stage">
    <text>Expressed early in development.</text>
</comment>
<comment type="disruption phenotype">
    <text evidence="6">No visible phenotype.</text>
</comment>
<comment type="similarity">
    <text evidence="7">Belongs to the semaphorin family.</text>
</comment>
<feature type="signal peptide" evidence="3">
    <location>
        <begin position="1"/>
        <end position="17"/>
    </location>
</feature>
<feature type="chain" id="PRO_0000032334" description="Semaphorin-4G">
    <location>
        <begin position="18"/>
        <end position="837"/>
    </location>
</feature>
<feature type="topological domain" description="Extracellular" evidence="3">
    <location>
        <begin position="18"/>
        <end position="673"/>
    </location>
</feature>
<feature type="transmembrane region" description="Helical" evidence="3">
    <location>
        <begin position="674"/>
        <end position="694"/>
    </location>
</feature>
<feature type="topological domain" description="Cytoplasmic" evidence="3">
    <location>
        <begin position="695"/>
        <end position="837"/>
    </location>
</feature>
<feature type="domain" description="Sema" evidence="4">
    <location>
        <begin position="35"/>
        <end position="503"/>
    </location>
</feature>
<feature type="domain" description="PSI">
    <location>
        <begin position="505"/>
        <end position="556"/>
    </location>
</feature>
<feature type="domain" description="Ig-like C2-type">
    <location>
        <begin position="565"/>
        <end position="647"/>
    </location>
</feature>
<feature type="region of interest" description="Disordered" evidence="5">
    <location>
        <begin position="721"/>
        <end position="776"/>
    </location>
</feature>
<feature type="compositionally biased region" description="Acidic residues" evidence="5">
    <location>
        <begin position="734"/>
        <end position="743"/>
    </location>
</feature>
<feature type="compositionally biased region" description="Pro residues" evidence="5">
    <location>
        <begin position="762"/>
        <end position="774"/>
    </location>
</feature>
<feature type="modified residue" description="Phosphoserine" evidence="2">
    <location>
        <position position="794"/>
    </location>
</feature>
<feature type="modified residue" description="Phosphoserine" evidence="8 9">
    <location>
        <position position="836"/>
    </location>
</feature>
<feature type="glycosylation site" description="N-linked (GlcNAc...) asparagine" evidence="3">
    <location>
        <position position="55"/>
    </location>
</feature>
<feature type="glycosylation site" description="N-linked (GlcNAc...) asparagine" evidence="3">
    <location>
        <position position="111"/>
    </location>
</feature>
<feature type="glycosylation site" description="N-linked (GlcNAc...) asparagine" evidence="3">
    <location>
        <position position="126"/>
    </location>
</feature>
<feature type="glycosylation site" description="N-linked (GlcNAc...) asparagine" evidence="3">
    <location>
        <position position="386"/>
    </location>
</feature>
<feature type="glycosylation site" description="N-linked (GlcNAc...) asparagine" evidence="3">
    <location>
        <position position="540"/>
    </location>
</feature>
<feature type="glycosylation site" description="N-linked (GlcNAc...) asparagine" evidence="3">
    <location>
        <position position="596"/>
    </location>
</feature>
<feature type="disulfide bond" evidence="1">
    <location>
        <begin position="104"/>
        <end position="115"/>
    </location>
</feature>
<feature type="disulfide bond" evidence="1">
    <location>
        <begin position="133"/>
        <end position="142"/>
    </location>
</feature>
<feature type="disulfide bond" evidence="1">
    <location>
        <begin position="268"/>
        <end position="375"/>
    </location>
</feature>
<feature type="disulfide bond" evidence="1">
    <location>
        <begin position="292"/>
        <end position="335"/>
    </location>
</feature>
<feature type="disulfide bond" evidence="1">
    <location>
        <begin position="506"/>
        <end position="523"/>
    </location>
</feature>
<feature type="disulfide bond" evidence="1">
    <location>
        <begin position="515"/>
        <end position="532"/>
    </location>
</feature>
<feature type="disulfide bond" evidence="1">
    <location>
        <begin position="582"/>
        <end position="630"/>
    </location>
</feature>
<reference key="1">
    <citation type="journal article" date="1999" name="Mech. Dev.">
        <title>Characterization and expression of sema4g, a novel member of the semaphorin gene family.</title>
        <authorList>
            <person name="Li H."/>
            <person name="Wu D.K."/>
            <person name="Sullivan S.L."/>
        </authorList>
    </citation>
    <scope>NUCLEOTIDE SEQUENCE [MRNA]</scope>
    <source>
        <strain>C57BL/6J</strain>
    </source>
</reference>
<reference key="2">
    <citation type="journal article" date="2004" name="Genome Res.">
        <title>The status, quality, and expansion of the NIH full-length cDNA project: the Mammalian Gene Collection (MGC).</title>
        <authorList>
            <consortium name="The MGC Project Team"/>
        </authorList>
    </citation>
    <scope>NUCLEOTIDE SEQUENCE [LARGE SCALE MRNA]</scope>
    <source>
        <strain>FVB/N</strain>
        <tissue>Colon</tissue>
    </source>
</reference>
<reference key="3">
    <citation type="journal article" date="2007" name="Proc. Natl. Acad. Sci. U.S.A.">
        <title>Large-scale phosphorylation analysis of mouse liver.</title>
        <authorList>
            <person name="Villen J."/>
            <person name="Beausoleil S.A."/>
            <person name="Gerber S.A."/>
            <person name="Gygi S.P."/>
        </authorList>
    </citation>
    <scope>PHOSPHORYLATION [LARGE SCALE ANALYSIS] AT SER-836</scope>
    <scope>IDENTIFICATION BY MASS SPECTROMETRY [LARGE SCALE ANALYSIS]</scope>
    <source>
        <tissue>Liver</tissue>
    </source>
</reference>
<reference key="4">
    <citation type="journal article" date="2010" name="Cell">
        <title>A tissue-specific atlas of mouse protein phosphorylation and expression.</title>
        <authorList>
            <person name="Huttlin E.L."/>
            <person name="Jedrychowski M.P."/>
            <person name="Elias J.E."/>
            <person name="Goswami T."/>
            <person name="Rad R."/>
            <person name="Beausoleil S.A."/>
            <person name="Villen J."/>
            <person name="Haas W."/>
            <person name="Sowa M.E."/>
            <person name="Gygi S.P."/>
        </authorList>
    </citation>
    <scope>PHOSPHORYLATION [LARGE SCALE ANALYSIS] AT SER-836</scope>
    <scope>IDENTIFICATION BY MASS SPECTROMETRY [LARGE SCALE ANALYSIS]</scope>
    <source>
        <tissue>Liver</tissue>
    </source>
</reference>
<reference key="5">
    <citation type="journal article" date="2011" name="Mol. Cell. Neurosci.">
        <title>Semaphorin 4C and 4G are ligands of Plexin-B2 required in cerebellar development.</title>
        <authorList>
            <person name="Maier V."/>
            <person name="Jolicoeur C."/>
            <person name="Rayburn H."/>
            <person name="Takegahara N."/>
            <person name="Kumanogoh A."/>
            <person name="Kikutani H."/>
            <person name="Tessier-Lavigne M."/>
            <person name="Wurst W."/>
            <person name="Friedel R.H."/>
        </authorList>
    </citation>
    <scope>FUNCTION</scope>
    <scope>INTERACTION WITH PLXNB2</scope>
    <scope>DISRUPTION PHENOTYPE</scope>
</reference>
<proteinExistence type="evidence at protein level"/>
<gene>
    <name type="primary">Sema4g</name>
</gene>
<keyword id="KW-1003">Cell membrane</keyword>
<keyword id="KW-0217">Developmental protein</keyword>
<keyword id="KW-0221">Differentiation</keyword>
<keyword id="KW-1015">Disulfide bond</keyword>
<keyword id="KW-0325">Glycoprotein</keyword>
<keyword id="KW-0393">Immunoglobulin domain</keyword>
<keyword id="KW-0472">Membrane</keyword>
<keyword id="KW-0524">Neurogenesis</keyword>
<keyword id="KW-0597">Phosphoprotein</keyword>
<keyword id="KW-1185">Reference proteome</keyword>
<keyword id="KW-0732">Signal</keyword>
<keyword id="KW-0812">Transmembrane</keyword>
<keyword id="KW-1133">Transmembrane helix</keyword>
<sequence length="837" mass="92378">MWGRLWPLLFSFLTVTAVPGPSLRRPSRELDATPRLTISYEELSQIRHFKGQTQNYSTLLLEEASERLLVGARGALFSLSARDIRDRTHKEIHWEASPEMQSKCHQKGKNNQTECFNHVRFLQRLNATHFYACGTHAFQPLCAAIDAETFILPTSFEEGKEKCPYDPARGFTGLIIDGGLYTATRYEFRSIPDIRRSRHPHSLRTEEAPMHWLNDAEFVFSVLVRESKTSAVGDDDKIYFFFMEREEGSSSFTQSRSSHRVARVARVCKGDLGGKKILQKKWTSFLKARLICHIPQYETLRGVCSLNADTSSHTHFYAVFTLTTQWKTLEASAICRYDLAEIQAVFTGPFMEYQDGARRWGRYEGGVPEPRPGSCITDSLRSRGYNSSQDLPSLVLDFVKLHPLMARPVVPTRGRPLLLKRNVRYTHLTGTHVSTPAGPTYDLLFLGTADGWIHKAVVLGSGMHIIEEIQVFREPQSVDNLVISPMQHSLYVGAASGVLQFPLSSCSRYQSCYDCILARDPYCGWDSSIHACMVATTVANRTELIQDIERGNRGCEGSRDAGPPPPLKTRSVLRGDDVLLPCDQPSNLARALWLLNGSKSLSDGQDGYRVGVDGLLVTDTQLEHSGNYGCYAEENGLRMLLASYSLTVRPATPAPAPQAPATPGAQLAHDMRMFYVVAIAILGGLCLILASSLLYVACLKGGRRGRRRKYSLGRAGRAGGSAVQLQTVSGQCPGEEDEGDDGEGTGGLESGCLQIIPGEGAPAPPPPPPPPPPAELTNGLVALPSRLRRMNGNSYVLLRQSNNGVPAGPCSFAEELSRILEKRKHTQLVEQLDESSV</sequence>
<name>SEM4G_MOUSE</name>
<protein>
    <recommendedName>
        <fullName>Semaphorin-4G</fullName>
    </recommendedName>
</protein>